<gene>
    <name evidence="2" type="primary">yju2</name>
    <name type="synonym">ccdc94</name>
</gene>
<sequence>MSERKVLNKYYPPDFDPSKIPKLKLPKDRQYVVRLMAPFNMRCKTCGEYIYKGKKFNARKETVQNELYLGLPIFRFYIKCTRCLAEITFKTDPENTDYAMEHGATRNFQAEKLIEEEEKKIQQEREDEELNNPMKVLENRTRDSKLEMEVLENLQELKELNQRQAQVDFEGMLGQYKELEQRQKQREQEEDEQETKEMLERALVKRLRDSDSEEEAENAKERSKKHIADKPTDILTTDTSTSSQGLSSAVAKKQSWDRSVGGLSVKGALGSLVVRKKPADSASKPSHAAPPPAAAAAGTQTGAVKPESSITSSSASSNIQPVSCQNGSSLGLLGAYSDSDDSSSD</sequence>
<reference key="1">
    <citation type="journal article" date="2013" name="Nature">
        <title>The zebrafish reference genome sequence and its relationship to the human genome.</title>
        <authorList>
            <person name="Howe K."/>
            <person name="Clark M.D."/>
            <person name="Torroja C.F."/>
            <person name="Torrance J."/>
            <person name="Berthelot C."/>
            <person name="Muffato M."/>
            <person name="Collins J.E."/>
            <person name="Humphray S."/>
            <person name="McLaren K."/>
            <person name="Matthews L."/>
            <person name="McLaren S."/>
            <person name="Sealy I."/>
            <person name="Caccamo M."/>
            <person name="Churcher C."/>
            <person name="Scott C."/>
            <person name="Barrett J.C."/>
            <person name="Koch R."/>
            <person name="Rauch G.J."/>
            <person name="White S."/>
            <person name="Chow W."/>
            <person name="Kilian B."/>
            <person name="Quintais L.T."/>
            <person name="Guerra-Assuncao J.A."/>
            <person name="Zhou Y."/>
            <person name="Gu Y."/>
            <person name="Yen J."/>
            <person name="Vogel J.H."/>
            <person name="Eyre T."/>
            <person name="Redmond S."/>
            <person name="Banerjee R."/>
            <person name="Chi J."/>
            <person name="Fu B."/>
            <person name="Langley E."/>
            <person name="Maguire S.F."/>
            <person name="Laird G.K."/>
            <person name="Lloyd D."/>
            <person name="Kenyon E."/>
            <person name="Donaldson S."/>
            <person name="Sehra H."/>
            <person name="Almeida-King J."/>
            <person name="Loveland J."/>
            <person name="Trevanion S."/>
            <person name="Jones M."/>
            <person name="Quail M."/>
            <person name="Willey D."/>
            <person name="Hunt A."/>
            <person name="Burton J."/>
            <person name="Sims S."/>
            <person name="McLay K."/>
            <person name="Plumb B."/>
            <person name="Davis J."/>
            <person name="Clee C."/>
            <person name="Oliver K."/>
            <person name="Clark R."/>
            <person name="Riddle C."/>
            <person name="Elliot D."/>
            <person name="Threadgold G."/>
            <person name="Harden G."/>
            <person name="Ware D."/>
            <person name="Begum S."/>
            <person name="Mortimore B."/>
            <person name="Kerry G."/>
            <person name="Heath P."/>
            <person name="Phillimore B."/>
            <person name="Tracey A."/>
            <person name="Corby N."/>
            <person name="Dunn M."/>
            <person name="Johnson C."/>
            <person name="Wood J."/>
            <person name="Clark S."/>
            <person name="Pelan S."/>
            <person name="Griffiths G."/>
            <person name="Smith M."/>
            <person name="Glithero R."/>
            <person name="Howden P."/>
            <person name="Barker N."/>
            <person name="Lloyd C."/>
            <person name="Stevens C."/>
            <person name="Harley J."/>
            <person name="Holt K."/>
            <person name="Panagiotidis G."/>
            <person name="Lovell J."/>
            <person name="Beasley H."/>
            <person name="Henderson C."/>
            <person name="Gordon D."/>
            <person name="Auger K."/>
            <person name="Wright D."/>
            <person name="Collins J."/>
            <person name="Raisen C."/>
            <person name="Dyer L."/>
            <person name="Leung K."/>
            <person name="Robertson L."/>
            <person name="Ambridge K."/>
            <person name="Leongamornlert D."/>
            <person name="McGuire S."/>
            <person name="Gilderthorp R."/>
            <person name="Griffiths C."/>
            <person name="Manthravadi D."/>
            <person name="Nichol S."/>
            <person name="Barker G."/>
            <person name="Whitehead S."/>
            <person name="Kay M."/>
            <person name="Brown J."/>
            <person name="Murnane C."/>
            <person name="Gray E."/>
            <person name="Humphries M."/>
            <person name="Sycamore N."/>
            <person name="Barker D."/>
            <person name="Saunders D."/>
            <person name="Wallis J."/>
            <person name="Babbage A."/>
            <person name="Hammond S."/>
            <person name="Mashreghi-Mohammadi M."/>
            <person name="Barr L."/>
            <person name="Martin S."/>
            <person name="Wray P."/>
            <person name="Ellington A."/>
            <person name="Matthews N."/>
            <person name="Ellwood M."/>
            <person name="Woodmansey R."/>
            <person name="Clark G."/>
            <person name="Cooper J."/>
            <person name="Tromans A."/>
            <person name="Grafham D."/>
            <person name="Skuce C."/>
            <person name="Pandian R."/>
            <person name="Andrews R."/>
            <person name="Harrison E."/>
            <person name="Kimberley A."/>
            <person name="Garnett J."/>
            <person name="Fosker N."/>
            <person name="Hall R."/>
            <person name="Garner P."/>
            <person name="Kelly D."/>
            <person name="Bird C."/>
            <person name="Palmer S."/>
            <person name="Gehring I."/>
            <person name="Berger A."/>
            <person name="Dooley C.M."/>
            <person name="Ersan-Urun Z."/>
            <person name="Eser C."/>
            <person name="Geiger H."/>
            <person name="Geisler M."/>
            <person name="Karotki L."/>
            <person name="Kirn A."/>
            <person name="Konantz J."/>
            <person name="Konantz M."/>
            <person name="Oberlander M."/>
            <person name="Rudolph-Geiger S."/>
            <person name="Teucke M."/>
            <person name="Lanz C."/>
            <person name="Raddatz G."/>
            <person name="Osoegawa K."/>
            <person name="Zhu B."/>
            <person name="Rapp A."/>
            <person name="Widaa S."/>
            <person name="Langford C."/>
            <person name="Yang F."/>
            <person name="Schuster S.C."/>
            <person name="Carter N.P."/>
            <person name="Harrow J."/>
            <person name="Ning Z."/>
            <person name="Herrero J."/>
            <person name="Searle S.M."/>
            <person name="Enright A."/>
            <person name="Geisler R."/>
            <person name="Plasterk R.H."/>
            <person name="Lee C."/>
            <person name="Westerfield M."/>
            <person name="de Jong P.J."/>
            <person name="Zon L.I."/>
            <person name="Postlethwait J.H."/>
            <person name="Nusslein-Volhard C."/>
            <person name="Hubbard T.J."/>
            <person name="Roest Crollius H."/>
            <person name="Rogers J."/>
            <person name="Stemple D.L."/>
        </authorList>
    </citation>
    <scope>NUCLEOTIDE SEQUENCE [LARGE SCALE GENOMIC DNA]</scope>
    <source>
        <strain>Tuebingen</strain>
    </source>
</reference>
<reference key="2">
    <citation type="submission" date="2008-11" db="EMBL/GenBank/DDBJ databases">
        <authorList>
            <consortium name="NIH - Zebrafish Gene Collection (ZGC) project"/>
        </authorList>
    </citation>
    <scope>NUCLEOTIDE SEQUENCE [LARGE SCALE MRNA]</scope>
</reference>
<reference key="3">
    <citation type="journal article" date="2012" name="PLoS Genet.">
        <title>Ccdc94 protects cells from ionizing radiation by inhibiting the expression of p53.</title>
        <authorList>
            <person name="Sorrells S."/>
            <person name="Carbonneau S."/>
            <person name="Harrington E."/>
            <person name="Chen A.T."/>
            <person name="Hast B."/>
            <person name="Milash B."/>
            <person name="Pyati U."/>
            <person name="Major M.B."/>
            <person name="Zhou Y."/>
            <person name="Zon L.I."/>
            <person name="Stewart R.A."/>
            <person name="Look A.T."/>
            <person name="Jette C."/>
        </authorList>
    </citation>
    <scope>FUNCTION</scope>
    <scope>DISRUPTION PHENOTYPE</scope>
    <scope>MUTAGENESIS OF 125-ARG--ASP-345</scope>
</reference>
<feature type="chain" id="PRO_0000444891" description="Splicing factor YJU2">
    <location>
        <begin position="1"/>
        <end position="345"/>
    </location>
</feature>
<feature type="region of interest" description="Disordered" evidence="3">
    <location>
        <begin position="205"/>
        <end position="345"/>
    </location>
</feature>
<feature type="compositionally biased region" description="Basic and acidic residues" evidence="3">
    <location>
        <begin position="217"/>
        <end position="232"/>
    </location>
</feature>
<feature type="compositionally biased region" description="Low complexity" evidence="3">
    <location>
        <begin position="308"/>
        <end position="317"/>
    </location>
</feature>
<feature type="compositionally biased region" description="Low complexity" evidence="3">
    <location>
        <begin position="327"/>
        <end position="337"/>
    </location>
</feature>
<feature type="binding site" evidence="2">
    <location>
        <position position="43"/>
    </location>
    <ligand>
        <name>Zn(2+)</name>
        <dbReference type="ChEBI" id="CHEBI:29105"/>
    </ligand>
</feature>
<feature type="binding site" evidence="2">
    <location>
        <position position="46"/>
    </location>
    <ligand>
        <name>Zn(2+)</name>
        <dbReference type="ChEBI" id="CHEBI:29105"/>
    </ligand>
</feature>
<feature type="binding site" evidence="2">
    <location>
        <position position="80"/>
    </location>
    <ligand>
        <name>Zn(2+)</name>
        <dbReference type="ChEBI" id="CHEBI:29105"/>
    </ligand>
</feature>
<feature type="binding site" evidence="2">
    <location>
        <position position="83"/>
    </location>
    <ligand>
        <name>Zn(2+)</name>
        <dbReference type="ChEBI" id="CHEBI:29105"/>
    </ligand>
</feature>
<feature type="mutagenesis site" description="In rs7; mutant embryos have a small head and a curled tail by day 2 and die by the end of day 3. Mutation causes increased sensitivity to IR-induced apoptosis. Mutants do not show changes in alternative splicing." evidence="4">
    <location>
        <begin position="125"/>
        <end position="345"/>
    </location>
</feature>
<dbReference type="EMBL" id="BX248231">
    <property type="status" value="NOT_ANNOTATED_CDS"/>
    <property type="molecule type" value="Genomic_DNA"/>
</dbReference>
<dbReference type="EMBL" id="BC171445">
    <property type="protein sequence ID" value="AAI71445.1"/>
    <property type="molecule type" value="mRNA"/>
</dbReference>
<dbReference type="EMBL" id="BC171449">
    <property type="protein sequence ID" value="AAI71449.1"/>
    <property type="molecule type" value="mRNA"/>
</dbReference>
<dbReference type="RefSeq" id="NP_001104303.1">
    <property type="nucleotide sequence ID" value="NM_001110833.1"/>
</dbReference>
<dbReference type="SMR" id="A8WHR3"/>
<dbReference type="FunCoup" id="A8WHR3">
    <property type="interactions" value="1357"/>
</dbReference>
<dbReference type="STRING" id="7955.ENSDARP00000035484"/>
<dbReference type="PaxDb" id="7955-ENSDARP00000035484"/>
<dbReference type="PeptideAtlas" id="A8WHR3"/>
<dbReference type="Ensembl" id="ENSDART00000036813">
    <property type="protein sequence ID" value="ENSDARP00000035484"/>
    <property type="gene ID" value="ENSDARG00000026185"/>
</dbReference>
<dbReference type="GeneID" id="393117"/>
<dbReference type="KEGG" id="dre:393117"/>
<dbReference type="AGR" id="ZFIN:ZDB-GENE-040426-841"/>
<dbReference type="CTD" id="55702"/>
<dbReference type="ZFIN" id="ZDB-GENE-040426-841">
    <property type="gene designation" value="yju2"/>
</dbReference>
<dbReference type="eggNOG" id="KOG2989">
    <property type="taxonomic scope" value="Eukaryota"/>
</dbReference>
<dbReference type="HOGENOM" id="CLU_053603_0_0_1"/>
<dbReference type="InParanoid" id="A8WHR3"/>
<dbReference type="OMA" id="PWRNEDE"/>
<dbReference type="OrthoDB" id="674963at2759"/>
<dbReference type="PhylomeDB" id="A8WHR3"/>
<dbReference type="TreeFam" id="TF315070"/>
<dbReference type="Reactome" id="R-DRE-72163">
    <property type="pathway name" value="mRNA Splicing - Major Pathway"/>
</dbReference>
<dbReference type="PRO" id="PR:A8WHR3"/>
<dbReference type="Proteomes" id="UP000000437">
    <property type="component" value="Chromosome 2"/>
</dbReference>
<dbReference type="Bgee" id="ENSDARG00000026185">
    <property type="expression patterns" value="Expressed in blastula and 29 other cell types or tissues"/>
</dbReference>
<dbReference type="GO" id="GO:0071006">
    <property type="term" value="C:U2-type catalytic step 1 spliceosome"/>
    <property type="evidence" value="ECO:0000318"/>
    <property type="project" value="GO_Central"/>
</dbReference>
<dbReference type="GO" id="GO:0046872">
    <property type="term" value="F:metal ion binding"/>
    <property type="evidence" value="ECO:0007669"/>
    <property type="project" value="UniProtKB-KW"/>
</dbReference>
<dbReference type="GO" id="GO:0000349">
    <property type="term" value="P:generation of catalytic spliceosome for first transesterification step"/>
    <property type="evidence" value="ECO:0007669"/>
    <property type="project" value="UniProtKB-UniRule"/>
</dbReference>
<dbReference type="GO" id="GO:0043518">
    <property type="term" value="P:negative regulation of DNA damage response, signal transduction by p53 class mediator"/>
    <property type="evidence" value="ECO:0000315"/>
    <property type="project" value="ZFIN"/>
</dbReference>
<dbReference type="GO" id="GO:0043524">
    <property type="term" value="P:negative regulation of neuron apoptotic process"/>
    <property type="evidence" value="ECO:0000315"/>
    <property type="project" value="ZFIN"/>
</dbReference>
<dbReference type="GO" id="GO:0008380">
    <property type="term" value="P:RNA splicing"/>
    <property type="evidence" value="ECO:0000318"/>
    <property type="project" value="GO_Central"/>
</dbReference>
<dbReference type="HAMAP" id="MF_03226">
    <property type="entry name" value="YJU2"/>
    <property type="match status" value="1"/>
</dbReference>
<dbReference type="InterPro" id="IPR007590">
    <property type="entry name" value="Saf4/Yju2"/>
</dbReference>
<dbReference type="InterPro" id="IPR043701">
    <property type="entry name" value="Yju2"/>
</dbReference>
<dbReference type="PANTHER" id="PTHR12111">
    <property type="entry name" value="SPLICING FACTOR YJU2"/>
    <property type="match status" value="1"/>
</dbReference>
<dbReference type="PANTHER" id="PTHR12111:SF1">
    <property type="entry name" value="SPLICING FACTOR YJU2"/>
    <property type="match status" value="1"/>
</dbReference>
<dbReference type="Pfam" id="PF04502">
    <property type="entry name" value="Saf4_Yju2"/>
    <property type="match status" value="1"/>
</dbReference>
<comment type="function">
    <text evidence="2 4">Part of the spliceosome which catalyzes two sequential transesterification reactions, first the excision of the non-coding intron from pre-mRNA and then the ligation of the coding exons to form the mature mRNA. Plays a role in stabilizing the structure of the spliceosome catalytic core and docking of the branch helix into the active site, producing 5'-exon and lariat intron-3'-intermediates (By similarity). May protect cells from TP53-dependent apoptosis upon dsDNA break damage through association with PRP19-CD5L complex (PubMed:22952453).</text>
</comment>
<comment type="subunit">
    <text evidence="2">Component of the spliceosome. Present in the activated B complex, the catalytically activated B* complex which catalyzes the branching, the catalytic step 1 C complex catalyzing the exon ligation, and the postcatalytic P complex containing the ligated exons (mRNA) and the excised lariat intron.</text>
</comment>
<comment type="subcellular location">
    <subcellularLocation>
        <location evidence="1 2">Nucleus</location>
    </subcellularLocation>
</comment>
<comment type="disruption phenotype">
    <text evidence="4">Morpholino knockdown of the protein causes small head and a curled tail by day 2. Knockdown causes increased sensitivity to IR-induced apoptosis (PubMed:22952453). In double morpholino knockdown of TP53 and YJU2, TP53 deficiency rescues animals from developmental neurodegeneration observed on YJU2 mutants and radiosensitivity (PubMed:22952453).</text>
</comment>
<comment type="similarity">
    <text evidence="2">Belongs to the CWC16 family. YJU2 subfamily.</text>
</comment>
<evidence type="ECO:0000250" key="1">
    <source>
        <dbReference type="UniProtKB" id="Q9BW85"/>
    </source>
</evidence>
<evidence type="ECO:0000255" key="2">
    <source>
        <dbReference type="HAMAP-Rule" id="MF_03226"/>
    </source>
</evidence>
<evidence type="ECO:0000256" key="3">
    <source>
        <dbReference type="SAM" id="MobiDB-lite"/>
    </source>
</evidence>
<evidence type="ECO:0000269" key="4">
    <source>
    </source>
</evidence>
<name>YJU2_DANRE</name>
<accession>A8WHR3</accession>
<proteinExistence type="evidence at protein level"/>
<protein>
    <recommendedName>
        <fullName evidence="2">Splicing factor YJU2</fullName>
    </recommendedName>
</protein>
<keyword id="KW-0479">Metal-binding</keyword>
<keyword id="KW-0507">mRNA processing</keyword>
<keyword id="KW-0508">mRNA splicing</keyword>
<keyword id="KW-0539">Nucleus</keyword>
<keyword id="KW-1185">Reference proteome</keyword>
<keyword id="KW-0747">Spliceosome</keyword>
<keyword id="KW-0862">Zinc</keyword>
<organism>
    <name type="scientific">Danio rerio</name>
    <name type="common">Zebrafish</name>
    <name type="synonym">Brachydanio rerio</name>
    <dbReference type="NCBI Taxonomy" id="7955"/>
    <lineage>
        <taxon>Eukaryota</taxon>
        <taxon>Metazoa</taxon>
        <taxon>Chordata</taxon>
        <taxon>Craniata</taxon>
        <taxon>Vertebrata</taxon>
        <taxon>Euteleostomi</taxon>
        <taxon>Actinopterygii</taxon>
        <taxon>Neopterygii</taxon>
        <taxon>Teleostei</taxon>
        <taxon>Ostariophysi</taxon>
        <taxon>Cypriniformes</taxon>
        <taxon>Danionidae</taxon>
        <taxon>Danioninae</taxon>
        <taxon>Danio</taxon>
    </lineage>
</organism>